<sequence>MAQQTPLYEQHTLCGARMVDFHGWMMPLHYGSQIDEHHAVRTDAGMFDVSHMTIVDLRGSRTREFLRYLLANDVAKLTKSGKALYSGMLNASGGVIDDLIVYYFTEDFFRLVVNSATREKDLSWITQHAEPFGIEITVRDDLSMIAVQGPNAQAKAATLFNDAQRQAVEGMKPFFGVQAGDLFIATTGYTGEAGYEIALPNEKAADFWRALVEAGVKPCGLGARDTLRLEAGMNLYSQEMDETISPLAANMGWTIAWEPADRDFIGREALEAQREHGTEKLVGLVMTEKGVLRNELPVRFTDAQGNQHEGIITSGTFSPTLGYSIALARVPEGIGETAIVQIRNREMPVKVTKPVFVRNGKAVA</sequence>
<evidence type="ECO:0000255" key="1">
    <source>
        <dbReference type="HAMAP-Rule" id="MF_00259"/>
    </source>
</evidence>
<keyword id="KW-0032">Aminotransferase</keyword>
<keyword id="KW-0808">Transferase</keyword>
<organism>
    <name type="scientific">Escherichia fergusonii (strain ATCC 35469 / DSM 13698 / CCUG 18766 / IAM 14443 / JCM 21226 / LMG 7866 / NBRC 102419 / NCTC 12128 / CDC 0568-73)</name>
    <dbReference type="NCBI Taxonomy" id="585054"/>
    <lineage>
        <taxon>Bacteria</taxon>
        <taxon>Pseudomonadati</taxon>
        <taxon>Pseudomonadota</taxon>
        <taxon>Gammaproteobacteria</taxon>
        <taxon>Enterobacterales</taxon>
        <taxon>Enterobacteriaceae</taxon>
        <taxon>Escherichia</taxon>
    </lineage>
</organism>
<reference key="1">
    <citation type="journal article" date="2009" name="PLoS Genet.">
        <title>Organised genome dynamics in the Escherichia coli species results in highly diverse adaptive paths.</title>
        <authorList>
            <person name="Touchon M."/>
            <person name="Hoede C."/>
            <person name="Tenaillon O."/>
            <person name="Barbe V."/>
            <person name="Baeriswyl S."/>
            <person name="Bidet P."/>
            <person name="Bingen E."/>
            <person name="Bonacorsi S."/>
            <person name="Bouchier C."/>
            <person name="Bouvet O."/>
            <person name="Calteau A."/>
            <person name="Chiapello H."/>
            <person name="Clermont O."/>
            <person name="Cruveiller S."/>
            <person name="Danchin A."/>
            <person name="Diard M."/>
            <person name="Dossat C."/>
            <person name="Karoui M.E."/>
            <person name="Frapy E."/>
            <person name="Garry L."/>
            <person name="Ghigo J.M."/>
            <person name="Gilles A.M."/>
            <person name="Johnson J."/>
            <person name="Le Bouguenec C."/>
            <person name="Lescat M."/>
            <person name="Mangenot S."/>
            <person name="Martinez-Jehanne V."/>
            <person name="Matic I."/>
            <person name="Nassif X."/>
            <person name="Oztas S."/>
            <person name="Petit M.A."/>
            <person name="Pichon C."/>
            <person name="Rouy Z."/>
            <person name="Ruf C.S."/>
            <person name="Schneider D."/>
            <person name="Tourret J."/>
            <person name="Vacherie B."/>
            <person name="Vallenet D."/>
            <person name="Medigue C."/>
            <person name="Rocha E.P.C."/>
            <person name="Denamur E."/>
        </authorList>
    </citation>
    <scope>NUCLEOTIDE SEQUENCE [LARGE SCALE GENOMIC DNA]</scope>
    <source>
        <strain>ATCC 35469 / DSM 13698 / BCRC 15582 / CCUG 18766 / IAM 14443 / JCM 21226 / LMG 7866 / NBRC 102419 / NCTC 12128 / CDC 0568-73</strain>
    </source>
</reference>
<proteinExistence type="inferred from homology"/>
<dbReference type="EC" id="2.1.2.10" evidence="1"/>
<dbReference type="EMBL" id="CU928158">
    <property type="protein sequence ID" value="CAQ90335.1"/>
    <property type="molecule type" value="Genomic_DNA"/>
</dbReference>
<dbReference type="RefSeq" id="WP_000068706.1">
    <property type="nucleotide sequence ID" value="NC_011740.1"/>
</dbReference>
<dbReference type="SMR" id="B7LPB9"/>
<dbReference type="GeneID" id="75173005"/>
<dbReference type="KEGG" id="efe:EFER_2841"/>
<dbReference type="HOGENOM" id="CLU_007884_10_2_6"/>
<dbReference type="OrthoDB" id="9774591at2"/>
<dbReference type="Proteomes" id="UP000000745">
    <property type="component" value="Chromosome"/>
</dbReference>
<dbReference type="GO" id="GO:0005829">
    <property type="term" value="C:cytosol"/>
    <property type="evidence" value="ECO:0007669"/>
    <property type="project" value="TreeGrafter"/>
</dbReference>
<dbReference type="GO" id="GO:0005960">
    <property type="term" value="C:glycine cleavage complex"/>
    <property type="evidence" value="ECO:0007669"/>
    <property type="project" value="InterPro"/>
</dbReference>
<dbReference type="GO" id="GO:0004047">
    <property type="term" value="F:aminomethyltransferase activity"/>
    <property type="evidence" value="ECO:0007669"/>
    <property type="project" value="UniProtKB-UniRule"/>
</dbReference>
<dbReference type="GO" id="GO:0008483">
    <property type="term" value="F:transaminase activity"/>
    <property type="evidence" value="ECO:0007669"/>
    <property type="project" value="UniProtKB-KW"/>
</dbReference>
<dbReference type="GO" id="GO:0019464">
    <property type="term" value="P:glycine decarboxylation via glycine cleavage system"/>
    <property type="evidence" value="ECO:0007669"/>
    <property type="project" value="UniProtKB-UniRule"/>
</dbReference>
<dbReference type="FunFam" id="2.40.30.110:FF:000001">
    <property type="entry name" value="Aminomethyltransferase"/>
    <property type="match status" value="1"/>
</dbReference>
<dbReference type="FunFam" id="3.30.70.1400:FF:000001">
    <property type="entry name" value="Aminomethyltransferase"/>
    <property type="match status" value="1"/>
</dbReference>
<dbReference type="FunFam" id="4.10.1250.10:FF:000001">
    <property type="entry name" value="Aminomethyltransferase"/>
    <property type="match status" value="1"/>
</dbReference>
<dbReference type="Gene3D" id="2.40.30.110">
    <property type="entry name" value="Aminomethyltransferase beta-barrel domains"/>
    <property type="match status" value="1"/>
</dbReference>
<dbReference type="Gene3D" id="3.30.70.1400">
    <property type="entry name" value="Aminomethyltransferase beta-barrel domains"/>
    <property type="match status" value="1"/>
</dbReference>
<dbReference type="Gene3D" id="4.10.1250.10">
    <property type="entry name" value="Aminomethyltransferase fragment"/>
    <property type="match status" value="1"/>
</dbReference>
<dbReference type="Gene3D" id="3.30.1360.120">
    <property type="entry name" value="Probable tRNA modification gtpase trme, domain 1"/>
    <property type="match status" value="1"/>
</dbReference>
<dbReference type="HAMAP" id="MF_00259">
    <property type="entry name" value="GcvT"/>
    <property type="match status" value="1"/>
</dbReference>
<dbReference type="InterPro" id="IPR006223">
    <property type="entry name" value="GCS_T"/>
</dbReference>
<dbReference type="InterPro" id="IPR022903">
    <property type="entry name" value="GCS_T_bac"/>
</dbReference>
<dbReference type="InterPro" id="IPR013977">
    <property type="entry name" value="GCST_C"/>
</dbReference>
<dbReference type="InterPro" id="IPR006222">
    <property type="entry name" value="GCV_T_N"/>
</dbReference>
<dbReference type="InterPro" id="IPR028896">
    <property type="entry name" value="GcvT/YgfZ/DmdA"/>
</dbReference>
<dbReference type="InterPro" id="IPR029043">
    <property type="entry name" value="GcvT/YgfZ_C"/>
</dbReference>
<dbReference type="InterPro" id="IPR027266">
    <property type="entry name" value="TrmE/GcvT_dom1"/>
</dbReference>
<dbReference type="NCBIfam" id="TIGR00528">
    <property type="entry name" value="gcvT"/>
    <property type="match status" value="1"/>
</dbReference>
<dbReference type="NCBIfam" id="NF001567">
    <property type="entry name" value="PRK00389.1"/>
    <property type="match status" value="1"/>
</dbReference>
<dbReference type="PANTHER" id="PTHR43757">
    <property type="entry name" value="AMINOMETHYLTRANSFERASE"/>
    <property type="match status" value="1"/>
</dbReference>
<dbReference type="PANTHER" id="PTHR43757:SF2">
    <property type="entry name" value="AMINOMETHYLTRANSFERASE, MITOCHONDRIAL"/>
    <property type="match status" value="1"/>
</dbReference>
<dbReference type="Pfam" id="PF01571">
    <property type="entry name" value="GCV_T"/>
    <property type="match status" value="1"/>
</dbReference>
<dbReference type="Pfam" id="PF08669">
    <property type="entry name" value="GCV_T_C"/>
    <property type="match status" value="1"/>
</dbReference>
<dbReference type="PIRSF" id="PIRSF006487">
    <property type="entry name" value="GcvT"/>
    <property type="match status" value="1"/>
</dbReference>
<dbReference type="SUPFAM" id="SSF101790">
    <property type="entry name" value="Aminomethyltransferase beta-barrel domain"/>
    <property type="match status" value="1"/>
</dbReference>
<dbReference type="SUPFAM" id="SSF103025">
    <property type="entry name" value="Folate-binding domain"/>
    <property type="match status" value="1"/>
</dbReference>
<comment type="function">
    <text evidence="1">The glycine cleavage system catalyzes the degradation of glycine.</text>
</comment>
<comment type="catalytic activity">
    <reaction evidence="1">
        <text>N(6)-[(R)-S(8)-aminomethyldihydrolipoyl]-L-lysyl-[protein] + (6S)-5,6,7,8-tetrahydrofolate = N(6)-[(R)-dihydrolipoyl]-L-lysyl-[protein] + (6R)-5,10-methylene-5,6,7,8-tetrahydrofolate + NH4(+)</text>
        <dbReference type="Rhea" id="RHEA:16945"/>
        <dbReference type="Rhea" id="RHEA-COMP:10475"/>
        <dbReference type="Rhea" id="RHEA-COMP:10492"/>
        <dbReference type="ChEBI" id="CHEBI:15636"/>
        <dbReference type="ChEBI" id="CHEBI:28938"/>
        <dbReference type="ChEBI" id="CHEBI:57453"/>
        <dbReference type="ChEBI" id="CHEBI:83100"/>
        <dbReference type="ChEBI" id="CHEBI:83143"/>
        <dbReference type="EC" id="2.1.2.10"/>
    </reaction>
</comment>
<comment type="subunit">
    <text evidence="1">The glycine cleavage system is composed of four proteins: P, T, L and H.</text>
</comment>
<comment type="similarity">
    <text evidence="1">Belongs to the GcvT family.</text>
</comment>
<accession>B7LPB9</accession>
<gene>
    <name evidence="1" type="primary">gcvT</name>
    <name type="ordered locus">EFER_2841</name>
</gene>
<name>GCST_ESCF3</name>
<protein>
    <recommendedName>
        <fullName evidence="1">Aminomethyltransferase</fullName>
        <ecNumber evidence="1">2.1.2.10</ecNumber>
    </recommendedName>
    <alternativeName>
        <fullName evidence="1">Glycine cleavage system T protein</fullName>
    </alternativeName>
</protein>
<feature type="chain" id="PRO_1000119202" description="Aminomethyltransferase">
    <location>
        <begin position="1"/>
        <end position="364"/>
    </location>
</feature>